<gene>
    <name type="primary">RTC1</name>
    <name type="ORF">CAWG_02309</name>
</gene>
<accession>C4YN69</accession>
<reference key="1">
    <citation type="journal article" date="2009" name="Nature">
        <title>Evolution of pathogenicity and sexual reproduction in eight Candida genomes.</title>
        <authorList>
            <person name="Butler G."/>
            <person name="Rasmussen M.D."/>
            <person name="Lin M.F."/>
            <person name="Santos M.A.S."/>
            <person name="Sakthikumar S."/>
            <person name="Munro C.A."/>
            <person name="Rheinbay E."/>
            <person name="Grabherr M."/>
            <person name="Forche A."/>
            <person name="Reedy J.L."/>
            <person name="Agrafioti I."/>
            <person name="Arnaud M.B."/>
            <person name="Bates S."/>
            <person name="Brown A.J.P."/>
            <person name="Brunke S."/>
            <person name="Costanzo M.C."/>
            <person name="Fitzpatrick D.A."/>
            <person name="de Groot P.W.J."/>
            <person name="Harris D."/>
            <person name="Hoyer L.L."/>
            <person name="Hube B."/>
            <person name="Klis F.M."/>
            <person name="Kodira C."/>
            <person name="Lennard N."/>
            <person name="Logue M.E."/>
            <person name="Martin R."/>
            <person name="Neiman A.M."/>
            <person name="Nikolaou E."/>
            <person name="Quail M.A."/>
            <person name="Quinn J."/>
            <person name="Santos M.C."/>
            <person name="Schmitzberger F.F."/>
            <person name="Sherlock G."/>
            <person name="Shah P."/>
            <person name="Silverstein K.A.T."/>
            <person name="Skrzypek M.S."/>
            <person name="Soll D."/>
            <person name="Staggs R."/>
            <person name="Stansfield I."/>
            <person name="Stumpf M.P.H."/>
            <person name="Sudbery P.E."/>
            <person name="Srikantha T."/>
            <person name="Zeng Q."/>
            <person name="Berman J."/>
            <person name="Berriman M."/>
            <person name="Heitman J."/>
            <person name="Gow N.A.R."/>
            <person name="Lorenz M.C."/>
            <person name="Birren B.W."/>
            <person name="Kellis M."/>
            <person name="Cuomo C.A."/>
        </authorList>
    </citation>
    <scope>NUCLEOTIDE SEQUENCE [LARGE SCALE GENOMIC DNA]</scope>
    <source>
        <strain>WO-1</strain>
    </source>
</reference>
<keyword id="KW-0479">Metal-binding</keyword>
<keyword id="KW-0677">Repeat</keyword>
<keyword id="KW-0926">Vacuole</keyword>
<keyword id="KW-0853">WD repeat</keyword>
<keyword id="KW-0862">Zinc</keyword>
<keyword id="KW-0863">Zinc-finger</keyword>
<sequence>MSQSNSHGQSNLAKFAFNIYGTLSTNSSTPQSHEISPSSSLSSSRSKKQTSQYNTQDTNNNRLSYYCDKEIISLSQLNCSLSIGGYSGDLQHHVVIGGKNYLRLLCVSESQQRIISGINLLESKSIYNSRAPNKLINVNTIKTFADTIATGLSNGVVSIYKISPNGQSKVTGKYSDHNRTINSLDFIESENQLLSGSQDGTIKLWDLRSSSTKPVMTVQANLHSDPIRACQYSPHSAVRNKICVLSVHDSGALCKFDLRTKSGGKVYSPEKKWNLHTGPALSLHIHPEKELVVTGGRDKRISIFNYGERQSRNTPQNLINTYGPVVKVRWSTYTNTEETAEEFEENKQAKPNTLYNYDIACSYLNDDPTITIYNLGRKFIPKQIIHSKKPIQNFIWARNETRSRKIWTISKSSTFSSYNLDRLEDSDVSRPIEDLNNIAMTWNNNNDFCAVSQARYDYDLETYENGINETTEENFDAERNYSLGNEELIHSQANSLTASPVDKPQLTRSLTFNPASSFSTFSPVLVARAATGFLQNDSATSSSSIPNMQVSSSRPKLTRNTSQTTQDSSSSQFASVLPPPSASQTYSSPQYKKNNPPRFMNNPAYVIPVSIPIPANDEYVFRKLSSESLVSTPDGFTLVDVCLLNASVAASVGNNRTSQIWRLLAVSIQEEFESGIEPRRIYAFQPEAINKLPQDVQETSTNANDTLHAETTNSNFVESFKSTSTSGSQFGKQSDKDERKLQSKNSSGNLMDMINKANRTNSFSATSFKFKEQERKEDESQKAQSIKDENERASIHSKSAPISISSHPEDLDDENMGSNNSAALKFSPPSVGVSIPSTRIISSSLASSPKSVRGPSGVKSHISRSRPSPPVQTWLKQKNLEVSNGSAMASTSGLSLTLKRNKTNEEGDQLTKAWKFKSLLRKSLDYATLQGDIIFCSTAALLFYDIVPEIISQFECLEWLGIYIEVLQRKRLFVNAINVIKCATADIQEKLQKLYCQDLSLRFYCSNCQALLVNEKSKFSGKGEFGYWYCDECSKLQSQCVYCNEPCKGLAVTVGLKCGHHGHFGCLKEWFIEDQNTECPGGCGYQII</sequence>
<protein>
    <recommendedName>
        <fullName>Restriction of telomere capping protein 1</fullName>
    </recommendedName>
</protein>
<dbReference type="EMBL" id="CM000309">
    <property type="protein sequence ID" value="EEQ44050.1"/>
    <property type="molecule type" value="Genomic_DNA"/>
</dbReference>
<dbReference type="SMR" id="C4YN69"/>
<dbReference type="PaxDb" id="5476-C4YN69"/>
<dbReference type="VEuPathDB" id="FungiDB:CAWG_02309"/>
<dbReference type="HOGENOM" id="CLU_008512_0_0_1"/>
<dbReference type="OMA" id="GRDGKCC"/>
<dbReference type="OrthoDB" id="18217at766764"/>
<dbReference type="Proteomes" id="UP000001429">
    <property type="component" value="Chromosome R"/>
</dbReference>
<dbReference type="GO" id="GO:0005829">
    <property type="term" value="C:cytosol"/>
    <property type="evidence" value="ECO:0007669"/>
    <property type="project" value="TreeGrafter"/>
</dbReference>
<dbReference type="GO" id="GO:0061700">
    <property type="term" value="C:GATOR2 complex"/>
    <property type="evidence" value="ECO:0007669"/>
    <property type="project" value="TreeGrafter"/>
</dbReference>
<dbReference type="GO" id="GO:0005774">
    <property type="term" value="C:vacuolar membrane"/>
    <property type="evidence" value="ECO:0007669"/>
    <property type="project" value="TreeGrafter"/>
</dbReference>
<dbReference type="GO" id="GO:0008270">
    <property type="term" value="F:zinc ion binding"/>
    <property type="evidence" value="ECO:0007669"/>
    <property type="project" value="UniProtKB-KW"/>
</dbReference>
<dbReference type="GO" id="GO:0016239">
    <property type="term" value="P:positive regulation of macroautophagy"/>
    <property type="evidence" value="ECO:0007669"/>
    <property type="project" value="TreeGrafter"/>
</dbReference>
<dbReference type="GO" id="GO:1904263">
    <property type="term" value="P:positive regulation of TORC1 signaling"/>
    <property type="evidence" value="ECO:0007669"/>
    <property type="project" value="TreeGrafter"/>
</dbReference>
<dbReference type="CDD" id="cd16488">
    <property type="entry name" value="mRING-H2-C3H3C2_Mio-like"/>
    <property type="match status" value="1"/>
</dbReference>
<dbReference type="Gene3D" id="2.130.10.10">
    <property type="entry name" value="YVTN repeat-like/Quinoprotein amine dehydrogenase"/>
    <property type="match status" value="1"/>
</dbReference>
<dbReference type="InterPro" id="IPR015943">
    <property type="entry name" value="WD40/YVTN_repeat-like_dom_sf"/>
</dbReference>
<dbReference type="InterPro" id="IPR019775">
    <property type="entry name" value="WD40_repeat_CS"/>
</dbReference>
<dbReference type="InterPro" id="IPR036322">
    <property type="entry name" value="WD40_repeat_dom_sf"/>
</dbReference>
<dbReference type="InterPro" id="IPR001680">
    <property type="entry name" value="WD40_rpt"/>
</dbReference>
<dbReference type="InterPro" id="IPR037590">
    <property type="entry name" value="WDR24"/>
</dbReference>
<dbReference type="InterPro" id="IPR049566">
    <property type="entry name" value="WDR59_RTC1-like_RING_Znf"/>
</dbReference>
<dbReference type="InterPro" id="IPR001841">
    <property type="entry name" value="Znf_RING"/>
</dbReference>
<dbReference type="PANTHER" id="PTHR46200">
    <property type="entry name" value="GATOR COMPLEX PROTEIN WDR24"/>
    <property type="match status" value="1"/>
</dbReference>
<dbReference type="PANTHER" id="PTHR46200:SF1">
    <property type="entry name" value="GATOR COMPLEX PROTEIN WDR24"/>
    <property type="match status" value="1"/>
</dbReference>
<dbReference type="Pfam" id="PF00400">
    <property type="entry name" value="WD40"/>
    <property type="match status" value="2"/>
</dbReference>
<dbReference type="Pfam" id="PF17120">
    <property type="entry name" value="zf-RING_16"/>
    <property type="match status" value="1"/>
</dbReference>
<dbReference type="SMART" id="SM00320">
    <property type="entry name" value="WD40"/>
    <property type="match status" value="4"/>
</dbReference>
<dbReference type="SUPFAM" id="SSF50978">
    <property type="entry name" value="WD40 repeat-like"/>
    <property type="match status" value="1"/>
</dbReference>
<dbReference type="PROSITE" id="PS00678">
    <property type="entry name" value="WD_REPEATS_1"/>
    <property type="match status" value="1"/>
</dbReference>
<dbReference type="PROSITE" id="PS50082">
    <property type="entry name" value="WD_REPEATS_2"/>
    <property type="match status" value="1"/>
</dbReference>
<dbReference type="PROSITE" id="PS50294">
    <property type="entry name" value="WD_REPEATS_REGION"/>
    <property type="match status" value="1"/>
</dbReference>
<dbReference type="PROSITE" id="PS50089">
    <property type="entry name" value="ZF_RING_2"/>
    <property type="match status" value="1"/>
</dbReference>
<feature type="chain" id="PRO_0000408778" description="Restriction of telomere capping protein 1">
    <location>
        <begin position="1"/>
        <end position="1088"/>
    </location>
</feature>
<feature type="repeat" description="WD 1">
    <location>
        <begin position="131"/>
        <end position="170"/>
    </location>
</feature>
<feature type="repeat" description="WD 2">
    <location>
        <begin position="176"/>
        <end position="215"/>
    </location>
</feature>
<feature type="repeat" description="WD 3">
    <location>
        <begin position="222"/>
        <end position="266"/>
    </location>
</feature>
<feature type="repeat" description="WD 4">
    <location>
        <begin position="275"/>
        <end position="314"/>
    </location>
</feature>
<feature type="repeat" description="WD 5">
    <location>
        <begin position="367"/>
        <end position="417"/>
    </location>
</feature>
<feature type="repeat" description="WD 6">
    <location>
        <begin position="432"/>
        <end position="473"/>
    </location>
</feature>
<feature type="repeat" description="WD 7">
    <location>
        <begin position="502"/>
        <end position="546"/>
    </location>
</feature>
<feature type="repeat" description="WD 8">
    <location>
        <begin position="631"/>
        <end position="671"/>
    </location>
</feature>
<feature type="zinc finger region" description="RING-type; degenerate" evidence="2">
    <location>
        <begin position="1040"/>
        <end position="1083"/>
    </location>
</feature>
<feature type="region of interest" description="Disordered" evidence="3">
    <location>
        <begin position="26"/>
        <end position="56"/>
    </location>
</feature>
<feature type="region of interest" description="Disordered" evidence="3">
    <location>
        <begin position="537"/>
        <end position="597"/>
    </location>
</feature>
<feature type="region of interest" description="Disordered" evidence="3">
    <location>
        <begin position="709"/>
        <end position="751"/>
    </location>
</feature>
<feature type="region of interest" description="Disordered" evidence="3">
    <location>
        <begin position="764"/>
        <end position="829"/>
    </location>
</feature>
<feature type="region of interest" description="Disordered" evidence="3">
    <location>
        <begin position="844"/>
        <end position="871"/>
    </location>
</feature>
<feature type="compositionally biased region" description="Low complexity" evidence="3">
    <location>
        <begin position="27"/>
        <end position="44"/>
    </location>
</feature>
<feature type="compositionally biased region" description="Polar residues" evidence="3">
    <location>
        <begin position="537"/>
        <end position="560"/>
    </location>
</feature>
<feature type="compositionally biased region" description="Low complexity" evidence="3">
    <location>
        <begin position="561"/>
        <end position="572"/>
    </location>
</feature>
<feature type="compositionally biased region" description="Polar residues" evidence="3">
    <location>
        <begin position="582"/>
        <end position="593"/>
    </location>
</feature>
<feature type="compositionally biased region" description="Polar residues" evidence="3">
    <location>
        <begin position="709"/>
        <end position="732"/>
    </location>
</feature>
<feature type="compositionally biased region" description="Basic and acidic residues" evidence="3">
    <location>
        <begin position="769"/>
        <end position="794"/>
    </location>
</feature>
<feature type="compositionally biased region" description="Polar residues" evidence="3">
    <location>
        <begin position="796"/>
        <end position="806"/>
    </location>
</feature>
<organism>
    <name type="scientific">Candida albicans (strain WO-1)</name>
    <name type="common">Yeast</name>
    <dbReference type="NCBI Taxonomy" id="294748"/>
    <lineage>
        <taxon>Eukaryota</taxon>
        <taxon>Fungi</taxon>
        <taxon>Dikarya</taxon>
        <taxon>Ascomycota</taxon>
        <taxon>Saccharomycotina</taxon>
        <taxon>Pichiomycetes</taxon>
        <taxon>Debaryomycetaceae</taxon>
        <taxon>Candida/Lodderomyces clade</taxon>
        <taxon>Candida</taxon>
    </lineage>
</organism>
<evidence type="ECO:0000250" key="1"/>
<evidence type="ECO:0000255" key="2">
    <source>
        <dbReference type="PROSITE-ProRule" id="PRU00175"/>
    </source>
</evidence>
<evidence type="ECO:0000256" key="3">
    <source>
        <dbReference type="SAM" id="MobiDB-lite"/>
    </source>
</evidence>
<evidence type="ECO:0000305" key="4"/>
<comment type="function">
    <text evidence="1">May be involved in a process influencing telomere capping.</text>
</comment>
<comment type="subcellular location">
    <subcellularLocation>
        <location evidence="1">Vacuole</location>
    </subcellularLocation>
</comment>
<comment type="similarity">
    <text evidence="4">Belongs to the WD repeat RTC1 family.</text>
</comment>
<proteinExistence type="inferred from homology"/>
<name>RTC1_CANAW</name>